<gene>
    <name evidence="1" type="primary">rnc</name>
    <name type="ordered locus">CFF8240_1742</name>
</gene>
<dbReference type="EC" id="3.1.26.3" evidence="1"/>
<dbReference type="EMBL" id="CP000487">
    <property type="protein sequence ID" value="ABK82097.1"/>
    <property type="molecule type" value="Genomic_DNA"/>
</dbReference>
<dbReference type="RefSeq" id="WP_010400315.1">
    <property type="nucleotide sequence ID" value="NC_008599.1"/>
</dbReference>
<dbReference type="SMR" id="A0RRM7"/>
<dbReference type="GeneID" id="61065552"/>
<dbReference type="KEGG" id="cff:CFF8240_1742"/>
<dbReference type="eggNOG" id="COG0571">
    <property type="taxonomic scope" value="Bacteria"/>
</dbReference>
<dbReference type="HOGENOM" id="CLU_000907_1_3_7"/>
<dbReference type="Proteomes" id="UP000000760">
    <property type="component" value="Chromosome"/>
</dbReference>
<dbReference type="GO" id="GO:0005737">
    <property type="term" value="C:cytoplasm"/>
    <property type="evidence" value="ECO:0007669"/>
    <property type="project" value="UniProtKB-SubCell"/>
</dbReference>
<dbReference type="GO" id="GO:0003725">
    <property type="term" value="F:double-stranded RNA binding"/>
    <property type="evidence" value="ECO:0007669"/>
    <property type="project" value="TreeGrafter"/>
</dbReference>
<dbReference type="GO" id="GO:0046872">
    <property type="term" value="F:metal ion binding"/>
    <property type="evidence" value="ECO:0007669"/>
    <property type="project" value="UniProtKB-KW"/>
</dbReference>
<dbReference type="GO" id="GO:0004525">
    <property type="term" value="F:ribonuclease III activity"/>
    <property type="evidence" value="ECO:0007669"/>
    <property type="project" value="UniProtKB-UniRule"/>
</dbReference>
<dbReference type="GO" id="GO:0019843">
    <property type="term" value="F:rRNA binding"/>
    <property type="evidence" value="ECO:0007669"/>
    <property type="project" value="UniProtKB-KW"/>
</dbReference>
<dbReference type="GO" id="GO:0006397">
    <property type="term" value="P:mRNA processing"/>
    <property type="evidence" value="ECO:0007669"/>
    <property type="project" value="UniProtKB-UniRule"/>
</dbReference>
<dbReference type="GO" id="GO:0010468">
    <property type="term" value="P:regulation of gene expression"/>
    <property type="evidence" value="ECO:0007669"/>
    <property type="project" value="TreeGrafter"/>
</dbReference>
<dbReference type="GO" id="GO:0006364">
    <property type="term" value="P:rRNA processing"/>
    <property type="evidence" value="ECO:0007669"/>
    <property type="project" value="UniProtKB-UniRule"/>
</dbReference>
<dbReference type="GO" id="GO:0008033">
    <property type="term" value="P:tRNA processing"/>
    <property type="evidence" value="ECO:0007669"/>
    <property type="project" value="UniProtKB-KW"/>
</dbReference>
<dbReference type="CDD" id="cd10845">
    <property type="entry name" value="DSRM_RNAse_III_family"/>
    <property type="match status" value="1"/>
</dbReference>
<dbReference type="CDD" id="cd00593">
    <property type="entry name" value="RIBOc"/>
    <property type="match status" value="1"/>
</dbReference>
<dbReference type="FunFam" id="1.10.1520.10:FF:000001">
    <property type="entry name" value="Ribonuclease 3"/>
    <property type="match status" value="1"/>
</dbReference>
<dbReference type="FunFam" id="3.30.160.20:FF:000003">
    <property type="entry name" value="Ribonuclease 3"/>
    <property type="match status" value="1"/>
</dbReference>
<dbReference type="Gene3D" id="3.30.160.20">
    <property type="match status" value="1"/>
</dbReference>
<dbReference type="Gene3D" id="1.10.1520.10">
    <property type="entry name" value="Ribonuclease III domain"/>
    <property type="match status" value="1"/>
</dbReference>
<dbReference type="HAMAP" id="MF_00104">
    <property type="entry name" value="RNase_III"/>
    <property type="match status" value="1"/>
</dbReference>
<dbReference type="InterPro" id="IPR014720">
    <property type="entry name" value="dsRBD_dom"/>
</dbReference>
<dbReference type="InterPro" id="IPR011907">
    <property type="entry name" value="RNase_III"/>
</dbReference>
<dbReference type="InterPro" id="IPR000999">
    <property type="entry name" value="RNase_III_dom"/>
</dbReference>
<dbReference type="InterPro" id="IPR036389">
    <property type="entry name" value="RNase_III_sf"/>
</dbReference>
<dbReference type="NCBIfam" id="TIGR02191">
    <property type="entry name" value="RNaseIII"/>
    <property type="match status" value="1"/>
</dbReference>
<dbReference type="PANTHER" id="PTHR11207:SF0">
    <property type="entry name" value="RIBONUCLEASE 3"/>
    <property type="match status" value="1"/>
</dbReference>
<dbReference type="PANTHER" id="PTHR11207">
    <property type="entry name" value="RIBONUCLEASE III"/>
    <property type="match status" value="1"/>
</dbReference>
<dbReference type="Pfam" id="PF00035">
    <property type="entry name" value="dsrm"/>
    <property type="match status" value="1"/>
</dbReference>
<dbReference type="Pfam" id="PF14622">
    <property type="entry name" value="Ribonucleas_3_3"/>
    <property type="match status" value="1"/>
</dbReference>
<dbReference type="SMART" id="SM00358">
    <property type="entry name" value="DSRM"/>
    <property type="match status" value="1"/>
</dbReference>
<dbReference type="SMART" id="SM00535">
    <property type="entry name" value="RIBOc"/>
    <property type="match status" value="1"/>
</dbReference>
<dbReference type="SUPFAM" id="SSF54768">
    <property type="entry name" value="dsRNA-binding domain-like"/>
    <property type="match status" value="1"/>
</dbReference>
<dbReference type="SUPFAM" id="SSF69065">
    <property type="entry name" value="RNase III domain-like"/>
    <property type="match status" value="1"/>
</dbReference>
<dbReference type="PROSITE" id="PS50137">
    <property type="entry name" value="DS_RBD"/>
    <property type="match status" value="1"/>
</dbReference>
<dbReference type="PROSITE" id="PS00517">
    <property type="entry name" value="RNASE_3_1"/>
    <property type="match status" value="1"/>
</dbReference>
<dbReference type="PROSITE" id="PS50142">
    <property type="entry name" value="RNASE_3_2"/>
    <property type="match status" value="1"/>
</dbReference>
<accession>A0RRM7</accession>
<comment type="function">
    <text evidence="1">Digests double-stranded RNA. Involved in the processing of primary rRNA transcript to yield the immediate precursors to the large and small rRNAs (23S and 16S). Processes some mRNAs, and tRNAs when they are encoded in the rRNA operon. Processes pre-crRNA and tracrRNA of type II CRISPR loci if present in the organism.</text>
</comment>
<comment type="catalytic activity">
    <reaction evidence="1">
        <text>Endonucleolytic cleavage to 5'-phosphomonoester.</text>
        <dbReference type="EC" id="3.1.26.3"/>
    </reaction>
</comment>
<comment type="cofactor">
    <cofactor evidence="1">
        <name>Mg(2+)</name>
        <dbReference type="ChEBI" id="CHEBI:18420"/>
    </cofactor>
</comment>
<comment type="subunit">
    <text evidence="1">Homodimer.</text>
</comment>
<comment type="subcellular location">
    <subcellularLocation>
        <location evidence="1">Cytoplasm</location>
    </subcellularLocation>
</comment>
<comment type="similarity">
    <text evidence="1">Belongs to the ribonuclease III family.</text>
</comment>
<organism>
    <name type="scientific">Campylobacter fetus subsp. fetus (strain 82-40)</name>
    <dbReference type="NCBI Taxonomy" id="360106"/>
    <lineage>
        <taxon>Bacteria</taxon>
        <taxon>Pseudomonadati</taxon>
        <taxon>Campylobacterota</taxon>
        <taxon>Epsilonproteobacteria</taxon>
        <taxon>Campylobacterales</taxon>
        <taxon>Campylobacteraceae</taxon>
        <taxon>Campylobacter</taxon>
    </lineage>
</organism>
<feature type="chain" id="PRO_1000075734" description="Ribonuclease 3">
    <location>
        <begin position="1"/>
        <end position="223"/>
    </location>
</feature>
<feature type="domain" description="RNase III" evidence="1">
    <location>
        <begin position="4"/>
        <end position="127"/>
    </location>
</feature>
<feature type="domain" description="DRBM" evidence="1">
    <location>
        <begin position="154"/>
        <end position="223"/>
    </location>
</feature>
<feature type="active site" evidence="1">
    <location>
        <position position="44"/>
    </location>
</feature>
<feature type="active site" evidence="1">
    <location>
        <position position="116"/>
    </location>
</feature>
<feature type="binding site" evidence="1">
    <location>
        <position position="40"/>
    </location>
    <ligand>
        <name>Mg(2+)</name>
        <dbReference type="ChEBI" id="CHEBI:18420"/>
    </ligand>
</feature>
<feature type="binding site" evidence="1">
    <location>
        <position position="113"/>
    </location>
    <ligand>
        <name>Mg(2+)</name>
        <dbReference type="ChEBI" id="CHEBI:18420"/>
    </ligand>
</feature>
<feature type="binding site" evidence="1">
    <location>
        <position position="116"/>
    </location>
    <ligand>
        <name>Mg(2+)</name>
        <dbReference type="ChEBI" id="CHEBI:18420"/>
    </ligand>
</feature>
<sequence length="223" mass="25052">MDKLNRLEEHLGYKFKNKTLLKEALTHKSMKSSVNNERLEFLGDAVLDLIVGEYLFFKFKDTDEGNLSKLRAALVNEKSFASISSQIRLGDFLYLSAAEDNNNGRNKPSLVSDALEALMGAIYLESGLEAVKKIFINLLESQYNNIDLQSLGKDYKTTLQEITQARFGVTPRYELVSSSGPDHKKSFEMAVFLNDKELARAIGNSKKEAEQSAAWKVLQGMNI</sequence>
<keyword id="KW-0963">Cytoplasm</keyword>
<keyword id="KW-0255">Endonuclease</keyword>
<keyword id="KW-0378">Hydrolase</keyword>
<keyword id="KW-0460">Magnesium</keyword>
<keyword id="KW-0479">Metal-binding</keyword>
<keyword id="KW-0507">mRNA processing</keyword>
<keyword id="KW-0540">Nuclease</keyword>
<keyword id="KW-0694">RNA-binding</keyword>
<keyword id="KW-0698">rRNA processing</keyword>
<keyword id="KW-0699">rRNA-binding</keyword>
<keyword id="KW-0819">tRNA processing</keyword>
<reference key="1">
    <citation type="submission" date="2006-11" db="EMBL/GenBank/DDBJ databases">
        <title>Sequence of Campylobacter fetus subsp. fetus 82-40.</title>
        <authorList>
            <person name="Fouts D.E."/>
            <person name="Nelson K.E."/>
        </authorList>
    </citation>
    <scope>NUCLEOTIDE SEQUENCE [LARGE SCALE GENOMIC DNA]</scope>
    <source>
        <strain>82-40</strain>
    </source>
</reference>
<protein>
    <recommendedName>
        <fullName evidence="1">Ribonuclease 3</fullName>
        <ecNumber evidence="1">3.1.26.3</ecNumber>
    </recommendedName>
    <alternativeName>
        <fullName evidence="1">Ribonuclease III</fullName>
        <shortName evidence="1">RNase III</shortName>
    </alternativeName>
</protein>
<evidence type="ECO:0000255" key="1">
    <source>
        <dbReference type="HAMAP-Rule" id="MF_00104"/>
    </source>
</evidence>
<proteinExistence type="inferred from homology"/>
<name>RNC_CAMFF</name>